<comment type="function">
    <text evidence="1">Can catalyze the hydrolysis of ATP in the presence of single-stranded DNA, the ATP-dependent uptake of single-stranded DNA by duplex DNA, and the ATP-dependent hybridization of homologous single-stranded DNAs. It interacts with LexA causing its activation and leading to its autocatalytic cleavage.</text>
</comment>
<comment type="subcellular location">
    <subcellularLocation>
        <location evidence="1">Cytoplasm</location>
    </subcellularLocation>
</comment>
<comment type="similarity">
    <text evidence="1">Belongs to the RecA family.</text>
</comment>
<organism>
    <name type="scientific">Mycobacterium marinum (strain ATCC BAA-535 / M)</name>
    <dbReference type="NCBI Taxonomy" id="216594"/>
    <lineage>
        <taxon>Bacteria</taxon>
        <taxon>Bacillati</taxon>
        <taxon>Actinomycetota</taxon>
        <taxon>Actinomycetes</taxon>
        <taxon>Mycobacteriales</taxon>
        <taxon>Mycobacteriaceae</taxon>
        <taxon>Mycobacterium</taxon>
        <taxon>Mycobacterium ulcerans group</taxon>
    </lineage>
</organism>
<gene>
    <name evidence="1" type="primary">recA</name>
    <name type="ordered locus">MMAR_1977</name>
</gene>
<keyword id="KW-0067">ATP-binding</keyword>
<keyword id="KW-0963">Cytoplasm</keyword>
<keyword id="KW-0227">DNA damage</keyword>
<keyword id="KW-0233">DNA recombination</keyword>
<keyword id="KW-0234">DNA repair</keyword>
<keyword id="KW-0238">DNA-binding</keyword>
<keyword id="KW-0547">Nucleotide-binding</keyword>
<keyword id="KW-1185">Reference proteome</keyword>
<keyword id="KW-0742">SOS response</keyword>
<dbReference type="EMBL" id="CP000854">
    <property type="protein sequence ID" value="ACC40427.1"/>
    <property type="molecule type" value="Genomic_DNA"/>
</dbReference>
<dbReference type="RefSeq" id="WP_012393764.1">
    <property type="nucleotide sequence ID" value="NC_010612.1"/>
</dbReference>
<dbReference type="SMR" id="B2HL06"/>
<dbReference type="STRING" id="216594.MMAR_1977"/>
<dbReference type="GeneID" id="34343505"/>
<dbReference type="GeneID" id="93437787"/>
<dbReference type="KEGG" id="mmi:MMAR_1977"/>
<dbReference type="eggNOG" id="COG0468">
    <property type="taxonomic scope" value="Bacteria"/>
</dbReference>
<dbReference type="HOGENOM" id="CLU_040469_1_2_11"/>
<dbReference type="OrthoDB" id="9776733at2"/>
<dbReference type="Proteomes" id="UP000001190">
    <property type="component" value="Chromosome"/>
</dbReference>
<dbReference type="GO" id="GO:0005829">
    <property type="term" value="C:cytosol"/>
    <property type="evidence" value="ECO:0007669"/>
    <property type="project" value="TreeGrafter"/>
</dbReference>
<dbReference type="GO" id="GO:0005524">
    <property type="term" value="F:ATP binding"/>
    <property type="evidence" value="ECO:0007669"/>
    <property type="project" value="UniProtKB-UniRule"/>
</dbReference>
<dbReference type="GO" id="GO:0016887">
    <property type="term" value="F:ATP hydrolysis activity"/>
    <property type="evidence" value="ECO:0007669"/>
    <property type="project" value="InterPro"/>
</dbReference>
<dbReference type="GO" id="GO:0140664">
    <property type="term" value="F:ATP-dependent DNA damage sensor activity"/>
    <property type="evidence" value="ECO:0007669"/>
    <property type="project" value="InterPro"/>
</dbReference>
<dbReference type="GO" id="GO:0003684">
    <property type="term" value="F:damaged DNA binding"/>
    <property type="evidence" value="ECO:0007669"/>
    <property type="project" value="UniProtKB-UniRule"/>
</dbReference>
<dbReference type="GO" id="GO:0003697">
    <property type="term" value="F:single-stranded DNA binding"/>
    <property type="evidence" value="ECO:0007669"/>
    <property type="project" value="UniProtKB-UniRule"/>
</dbReference>
<dbReference type="GO" id="GO:0006310">
    <property type="term" value="P:DNA recombination"/>
    <property type="evidence" value="ECO:0007669"/>
    <property type="project" value="UniProtKB-UniRule"/>
</dbReference>
<dbReference type="GO" id="GO:0006281">
    <property type="term" value="P:DNA repair"/>
    <property type="evidence" value="ECO:0007669"/>
    <property type="project" value="UniProtKB-UniRule"/>
</dbReference>
<dbReference type="GO" id="GO:0009432">
    <property type="term" value="P:SOS response"/>
    <property type="evidence" value="ECO:0007669"/>
    <property type="project" value="UniProtKB-UniRule"/>
</dbReference>
<dbReference type="CDD" id="cd00983">
    <property type="entry name" value="RecA"/>
    <property type="match status" value="1"/>
</dbReference>
<dbReference type="FunFam" id="3.40.50.300:FF:002436">
    <property type="entry name" value="Protein RecA"/>
    <property type="match status" value="1"/>
</dbReference>
<dbReference type="Gene3D" id="3.40.50.300">
    <property type="entry name" value="P-loop containing nucleotide triphosphate hydrolases"/>
    <property type="match status" value="1"/>
</dbReference>
<dbReference type="HAMAP" id="MF_00268">
    <property type="entry name" value="RecA"/>
    <property type="match status" value="1"/>
</dbReference>
<dbReference type="InterPro" id="IPR003593">
    <property type="entry name" value="AAA+_ATPase"/>
</dbReference>
<dbReference type="InterPro" id="IPR013765">
    <property type="entry name" value="DNA_recomb/repair_RecA"/>
</dbReference>
<dbReference type="InterPro" id="IPR020584">
    <property type="entry name" value="DNA_recomb/repair_RecA_CS"/>
</dbReference>
<dbReference type="InterPro" id="IPR027417">
    <property type="entry name" value="P-loop_NTPase"/>
</dbReference>
<dbReference type="InterPro" id="IPR049261">
    <property type="entry name" value="RecA-like_C"/>
</dbReference>
<dbReference type="InterPro" id="IPR049428">
    <property type="entry name" value="RecA-like_N"/>
</dbReference>
<dbReference type="InterPro" id="IPR020588">
    <property type="entry name" value="RecA_ATP-bd"/>
</dbReference>
<dbReference type="InterPro" id="IPR023400">
    <property type="entry name" value="RecA_C_sf"/>
</dbReference>
<dbReference type="InterPro" id="IPR020587">
    <property type="entry name" value="RecA_monomer-monomer_interface"/>
</dbReference>
<dbReference type="NCBIfam" id="TIGR02012">
    <property type="entry name" value="tigrfam_recA"/>
    <property type="match status" value="1"/>
</dbReference>
<dbReference type="PANTHER" id="PTHR45900:SF1">
    <property type="entry name" value="MITOCHONDRIAL DNA REPAIR PROTEIN RECA HOMOLOG-RELATED"/>
    <property type="match status" value="1"/>
</dbReference>
<dbReference type="PANTHER" id="PTHR45900">
    <property type="entry name" value="RECA"/>
    <property type="match status" value="1"/>
</dbReference>
<dbReference type="Pfam" id="PF00154">
    <property type="entry name" value="RecA"/>
    <property type="match status" value="1"/>
</dbReference>
<dbReference type="Pfam" id="PF21096">
    <property type="entry name" value="RecA_C"/>
    <property type="match status" value="1"/>
</dbReference>
<dbReference type="PRINTS" id="PR00142">
    <property type="entry name" value="RECA"/>
</dbReference>
<dbReference type="SMART" id="SM00382">
    <property type="entry name" value="AAA"/>
    <property type="match status" value="1"/>
</dbReference>
<dbReference type="SUPFAM" id="SSF52540">
    <property type="entry name" value="P-loop containing nucleoside triphosphate hydrolases"/>
    <property type="match status" value="1"/>
</dbReference>
<dbReference type="SUPFAM" id="SSF54752">
    <property type="entry name" value="RecA protein, C-terminal domain"/>
    <property type="match status" value="1"/>
</dbReference>
<dbReference type="PROSITE" id="PS00321">
    <property type="entry name" value="RECA_1"/>
    <property type="match status" value="1"/>
</dbReference>
<dbReference type="PROSITE" id="PS50162">
    <property type="entry name" value="RECA_2"/>
    <property type="match status" value="1"/>
</dbReference>
<dbReference type="PROSITE" id="PS50163">
    <property type="entry name" value="RECA_3"/>
    <property type="match status" value="1"/>
</dbReference>
<evidence type="ECO:0000255" key="1">
    <source>
        <dbReference type="HAMAP-Rule" id="MF_00268"/>
    </source>
</evidence>
<sequence>MAQAPDREKALELAMAQIEKSYGKGSVMRLGDEVRQPISIIPTGSIALDVALGIGGLPRGRVIEIYGPESSGKTTVALHAVANAQAAGGVAAFIDAEHALDPEYAKKLGVDTDSLLVSQPDTGEQALEIADMLIRSGALDIVVIDSVAALVPRAELEGEMGDSHVGLQARLMSQALRKMTGALNNSGTTAIFINQLRDKIGVMFGSPETTTGGKALKFYASVRMDVRRIETLKDGTNAVGNRTRVKIVKNKVSPPFKQAEFDILYGRGISREGSLIDMGVDQGFIRKSGAWFTYEGEQLGQGKENARNFLLENGEVANEIEKKIKEKLGIGAVVTDDGVLPAPVDF</sequence>
<reference key="1">
    <citation type="journal article" date="2008" name="Genome Res.">
        <title>Insights from the complete genome sequence of Mycobacterium marinum on the evolution of Mycobacterium tuberculosis.</title>
        <authorList>
            <person name="Stinear T.P."/>
            <person name="Seemann T."/>
            <person name="Harrison P.F."/>
            <person name="Jenkin G.A."/>
            <person name="Davies J.K."/>
            <person name="Johnson P.D."/>
            <person name="Abdellah Z."/>
            <person name="Arrowsmith C."/>
            <person name="Chillingworth T."/>
            <person name="Churcher C."/>
            <person name="Clarke K."/>
            <person name="Cronin A."/>
            <person name="Davis P."/>
            <person name="Goodhead I."/>
            <person name="Holroyd N."/>
            <person name="Jagels K."/>
            <person name="Lord A."/>
            <person name="Moule S."/>
            <person name="Mungall K."/>
            <person name="Norbertczak H."/>
            <person name="Quail M.A."/>
            <person name="Rabbinowitsch E."/>
            <person name="Walker D."/>
            <person name="White B."/>
            <person name="Whitehead S."/>
            <person name="Small P.L."/>
            <person name="Brosch R."/>
            <person name="Ramakrishnan L."/>
            <person name="Fischbach M.A."/>
            <person name="Parkhill J."/>
            <person name="Cole S.T."/>
        </authorList>
    </citation>
    <scope>NUCLEOTIDE SEQUENCE [LARGE SCALE GENOMIC DNA]</scope>
    <source>
        <strain>ATCC BAA-535 / M</strain>
    </source>
</reference>
<protein>
    <recommendedName>
        <fullName evidence="1">Protein RecA</fullName>
    </recommendedName>
    <alternativeName>
        <fullName evidence="1">Recombinase A</fullName>
    </alternativeName>
</protein>
<accession>B2HL06</accession>
<name>RECA_MYCMM</name>
<proteinExistence type="inferred from homology"/>
<feature type="chain" id="PRO_1000114349" description="Protein RecA">
    <location>
        <begin position="1"/>
        <end position="346"/>
    </location>
</feature>
<feature type="binding site" evidence="1">
    <location>
        <begin position="67"/>
        <end position="74"/>
    </location>
    <ligand>
        <name>ATP</name>
        <dbReference type="ChEBI" id="CHEBI:30616"/>
    </ligand>
</feature>